<sequence>MLKFKNRIVEKRVKGAEKASFGGPVLLYRTLRKVTKLYKYITDKKSFPILVTSLFALFNPNSVLAADKYSNFEELKENESPLSYNILTTDVDRRVLILAPHGGGIEGGTSELARELSKSYSAYLFEGLRIPGASELHITSTNFDEPQALDLLSKHDLTISIHGYASSKKHTLVGGTDREKAAKITSLLTDAGFSAELLSEDSRLAGTNEQNIANKNSTGMSIQLEISTEQRREMFNTFTLAGRNGTQNQVFYDYIAVLTKFINENVYCMAGVAP</sequence>
<organism>
    <name type="scientific">Bacillus subtilis (strain 168)</name>
    <dbReference type="NCBI Taxonomy" id="224308"/>
    <lineage>
        <taxon>Bacteria</taxon>
        <taxon>Bacillati</taxon>
        <taxon>Bacillota</taxon>
        <taxon>Bacilli</taxon>
        <taxon>Bacillales</taxon>
        <taxon>Bacillaceae</taxon>
        <taxon>Bacillus</taxon>
    </lineage>
</organism>
<protein>
    <recommendedName>
        <fullName>SPbeta prophage-derived UPF0714 protein YoqZ</fullName>
    </recommendedName>
</protein>
<reference key="1">
    <citation type="journal article" date="1997" name="Nature">
        <title>The complete genome sequence of the Gram-positive bacterium Bacillus subtilis.</title>
        <authorList>
            <person name="Kunst F."/>
            <person name="Ogasawara N."/>
            <person name="Moszer I."/>
            <person name="Albertini A.M."/>
            <person name="Alloni G."/>
            <person name="Azevedo V."/>
            <person name="Bertero M.G."/>
            <person name="Bessieres P."/>
            <person name="Bolotin A."/>
            <person name="Borchert S."/>
            <person name="Borriss R."/>
            <person name="Boursier L."/>
            <person name="Brans A."/>
            <person name="Braun M."/>
            <person name="Brignell S.C."/>
            <person name="Bron S."/>
            <person name="Brouillet S."/>
            <person name="Bruschi C.V."/>
            <person name="Caldwell B."/>
            <person name="Capuano V."/>
            <person name="Carter N.M."/>
            <person name="Choi S.-K."/>
            <person name="Codani J.-J."/>
            <person name="Connerton I.F."/>
            <person name="Cummings N.J."/>
            <person name="Daniel R.A."/>
            <person name="Denizot F."/>
            <person name="Devine K.M."/>
            <person name="Duesterhoeft A."/>
            <person name="Ehrlich S.D."/>
            <person name="Emmerson P.T."/>
            <person name="Entian K.-D."/>
            <person name="Errington J."/>
            <person name="Fabret C."/>
            <person name="Ferrari E."/>
            <person name="Foulger D."/>
            <person name="Fritz C."/>
            <person name="Fujita M."/>
            <person name="Fujita Y."/>
            <person name="Fuma S."/>
            <person name="Galizzi A."/>
            <person name="Galleron N."/>
            <person name="Ghim S.-Y."/>
            <person name="Glaser P."/>
            <person name="Goffeau A."/>
            <person name="Golightly E.J."/>
            <person name="Grandi G."/>
            <person name="Guiseppi G."/>
            <person name="Guy B.J."/>
            <person name="Haga K."/>
            <person name="Haiech J."/>
            <person name="Harwood C.R."/>
            <person name="Henaut A."/>
            <person name="Hilbert H."/>
            <person name="Holsappel S."/>
            <person name="Hosono S."/>
            <person name="Hullo M.-F."/>
            <person name="Itaya M."/>
            <person name="Jones L.-M."/>
            <person name="Joris B."/>
            <person name="Karamata D."/>
            <person name="Kasahara Y."/>
            <person name="Klaerr-Blanchard M."/>
            <person name="Klein C."/>
            <person name="Kobayashi Y."/>
            <person name="Koetter P."/>
            <person name="Koningstein G."/>
            <person name="Krogh S."/>
            <person name="Kumano M."/>
            <person name="Kurita K."/>
            <person name="Lapidus A."/>
            <person name="Lardinois S."/>
            <person name="Lauber J."/>
            <person name="Lazarevic V."/>
            <person name="Lee S.-M."/>
            <person name="Levine A."/>
            <person name="Liu H."/>
            <person name="Masuda S."/>
            <person name="Mauel C."/>
            <person name="Medigue C."/>
            <person name="Medina N."/>
            <person name="Mellado R.P."/>
            <person name="Mizuno M."/>
            <person name="Moestl D."/>
            <person name="Nakai S."/>
            <person name="Noback M."/>
            <person name="Noone D."/>
            <person name="O'Reilly M."/>
            <person name="Ogawa K."/>
            <person name="Ogiwara A."/>
            <person name="Oudega B."/>
            <person name="Park S.-H."/>
            <person name="Parro V."/>
            <person name="Pohl T.M."/>
            <person name="Portetelle D."/>
            <person name="Porwollik S."/>
            <person name="Prescott A.M."/>
            <person name="Presecan E."/>
            <person name="Pujic P."/>
            <person name="Purnelle B."/>
            <person name="Rapoport G."/>
            <person name="Rey M."/>
            <person name="Reynolds S."/>
            <person name="Rieger M."/>
            <person name="Rivolta C."/>
            <person name="Rocha E."/>
            <person name="Roche B."/>
            <person name="Rose M."/>
            <person name="Sadaie Y."/>
            <person name="Sato T."/>
            <person name="Scanlan E."/>
            <person name="Schleich S."/>
            <person name="Schroeter R."/>
            <person name="Scoffone F."/>
            <person name="Sekiguchi J."/>
            <person name="Sekowska A."/>
            <person name="Seror S.J."/>
            <person name="Serror P."/>
            <person name="Shin B.-S."/>
            <person name="Soldo B."/>
            <person name="Sorokin A."/>
            <person name="Tacconi E."/>
            <person name="Takagi T."/>
            <person name="Takahashi H."/>
            <person name="Takemaru K."/>
            <person name="Takeuchi M."/>
            <person name="Tamakoshi A."/>
            <person name="Tanaka T."/>
            <person name="Terpstra P."/>
            <person name="Tognoni A."/>
            <person name="Tosato V."/>
            <person name="Uchiyama S."/>
            <person name="Vandenbol M."/>
            <person name="Vannier F."/>
            <person name="Vassarotti A."/>
            <person name="Viari A."/>
            <person name="Wambutt R."/>
            <person name="Wedler E."/>
            <person name="Wedler H."/>
            <person name="Weitzenegger T."/>
            <person name="Winters P."/>
            <person name="Wipat A."/>
            <person name="Yamamoto H."/>
            <person name="Yamane K."/>
            <person name="Yasumoto K."/>
            <person name="Yata K."/>
            <person name="Yoshida K."/>
            <person name="Yoshikawa H.-F."/>
            <person name="Zumstein E."/>
            <person name="Yoshikawa H."/>
            <person name="Danchin A."/>
        </authorList>
    </citation>
    <scope>NUCLEOTIDE SEQUENCE [LARGE SCALE GENOMIC DNA]</scope>
    <source>
        <strain>168</strain>
    </source>
</reference>
<gene>
    <name type="primary">yoqZ</name>
    <name type="ordered locus">BSU20460</name>
</gene>
<name>YOQZ_BACSU</name>
<evidence type="ECO:0000305" key="1"/>
<feature type="chain" id="PRO_0000360613" description="SPbeta prophage-derived UPF0714 protein YoqZ">
    <location>
        <begin position="1"/>
        <end position="274"/>
    </location>
</feature>
<comment type="similarity">
    <text evidence="1">Belongs to the UPF0714 family.</text>
</comment>
<proteinExistence type="inferred from homology"/>
<keyword id="KW-1185">Reference proteome</keyword>
<accession>O31913</accession>
<dbReference type="EMBL" id="AL009126">
    <property type="protein sequence ID" value="CAB13938.1"/>
    <property type="molecule type" value="Genomic_DNA"/>
</dbReference>
<dbReference type="SMR" id="O31913"/>
<dbReference type="FunCoup" id="O31913">
    <property type="interactions" value="51"/>
</dbReference>
<dbReference type="STRING" id="224308.BSU20460"/>
<dbReference type="PaxDb" id="224308-BSU20460"/>
<dbReference type="DNASU" id="939582"/>
<dbReference type="EnsemblBacteria" id="CAB13938">
    <property type="protein sequence ID" value="CAB13938"/>
    <property type="gene ID" value="BSU_20460"/>
</dbReference>
<dbReference type="GeneID" id="939582"/>
<dbReference type="KEGG" id="bsu:BSU20460"/>
<dbReference type="PATRIC" id="fig|224308.179.peg.2236"/>
<dbReference type="eggNOG" id="COG4195">
    <property type="taxonomic scope" value="Bacteria"/>
</dbReference>
<dbReference type="InParanoid" id="O31913"/>
<dbReference type="OrthoDB" id="7721587at2"/>
<dbReference type="PhylomeDB" id="O31913"/>
<dbReference type="BioCyc" id="BSUB:BSU20460-MONOMER"/>
<dbReference type="Proteomes" id="UP000001570">
    <property type="component" value="Chromosome"/>
</dbReference>
<dbReference type="GO" id="GO:0016787">
    <property type="term" value="F:hydrolase activity"/>
    <property type="evidence" value="ECO:0000314"/>
    <property type="project" value="CACAO"/>
</dbReference>
<dbReference type="Gene3D" id="3.40.630.100">
    <property type="entry name" value="Poly-gamma-glutamate hydrolase, zinc-binding motif"/>
    <property type="match status" value="1"/>
</dbReference>
<dbReference type="InterPro" id="IPR008585">
    <property type="entry name" value="Gamma_PGA_hydro"/>
</dbReference>
<dbReference type="InterPro" id="IPR038128">
    <property type="entry name" value="Gamma_PGA_hydro_sf"/>
</dbReference>
<dbReference type="Pfam" id="PF05908">
    <property type="entry name" value="Gamma_PGA_hydro"/>
    <property type="match status" value="1"/>
</dbReference>